<comment type="function">
    <text evidence="1">Catalyzes the attachment of serine to tRNA(Ser). Is also able to aminoacylate tRNA(Sec) with serine, to form the misacylated tRNA L-seryl-tRNA(Sec), which will be further converted into selenocysteinyl-tRNA(Sec).</text>
</comment>
<comment type="catalytic activity">
    <reaction evidence="1">
        <text>tRNA(Ser) + L-serine + ATP = L-seryl-tRNA(Ser) + AMP + diphosphate + H(+)</text>
        <dbReference type="Rhea" id="RHEA:12292"/>
        <dbReference type="Rhea" id="RHEA-COMP:9669"/>
        <dbReference type="Rhea" id="RHEA-COMP:9703"/>
        <dbReference type="ChEBI" id="CHEBI:15378"/>
        <dbReference type="ChEBI" id="CHEBI:30616"/>
        <dbReference type="ChEBI" id="CHEBI:33019"/>
        <dbReference type="ChEBI" id="CHEBI:33384"/>
        <dbReference type="ChEBI" id="CHEBI:78442"/>
        <dbReference type="ChEBI" id="CHEBI:78533"/>
        <dbReference type="ChEBI" id="CHEBI:456215"/>
        <dbReference type="EC" id="6.1.1.11"/>
    </reaction>
</comment>
<comment type="catalytic activity">
    <reaction evidence="1">
        <text>tRNA(Sec) + L-serine + ATP = L-seryl-tRNA(Sec) + AMP + diphosphate + H(+)</text>
        <dbReference type="Rhea" id="RHEA:42580"/>
        <dbReference type="Rhea" id="RHEA-COMP:9742"/>
        <dbReference type="Rhea" id="RHEA-COMP:10128"/>
        <dbReference type="ChEBI" id="CHEBI:15378"/>
        <dbReference type="ChEBI" id="CHEBI:30616"/>
        <dbReference type="ChEBI" id="CHEBI:33019"/>
        <dbReference type="ChEBI" id="CHEBI:33384"/>
        <dbReference type="ChEBI" id="CHEBI:78442"/>
        <dbReference type="ChEBI" id="CHEBI:78533"/>
        <dbReference type="ChEBI" id="CHEBI:456215"/>
        <dbReference type="EC" id="6.1.1.11"/>
    </reaction>
</comment>
<comment type="pathway">
    <text evidence="1">Aminoacyl-tRNA biosynthesis; selenocysteinyl-tRNA(Sec) biosynthesis; L-seryl-tRNA(Sec) from L-serine and tRNA(Sec): step 1/1.</text>
</comment>
<comment type="subunit">
    <text evidence="1">Homodimer. The tRNA molecule binds across the dimer.</text>
</comment>
<comment type="subcellular location">
    <subcellularLocation>
        <location evidence="1">Cytoplasm</location>
    </subcellularLocation>
</comment>
<comment type="domain">
    <text evidence="1">Consists of two distinct domains, a catalytic core and a N-terminal extension that is involved in tRNA binding.</text>
</comment>
<comment type="similarity">
    <text evidence="1">Belongs to the class-II aminoacyl-tRNA synthetase family. Type-1 seryl-tRNA synthetase subfamily.</text>
</comment>
<gene>
    <name evidence="1" type="primary">serS</name>
    <name type="ordered locus">TON_1090</name>
</gene>
<protein>
    <recommendedName>
        <fullName evidence="1">Serine--tRNA ligase</fullName>
        <ecNumber evidence="1">6.1.1.11</ecNumber>
    </recommendedName>
    <alternativeName>
        <fullName evidence="1">Seryl-tRNA synthetase</fullName>
        <shortName evidence="1">SerRS</shortName>
    </alternativeName>
    <alternativeName>
        <fullName evidence="1">Seryl-tRNA(Ser/Sec) synthetase</fullName>
    </alternativeName>
</protein>
<name>SYS_THEON</name>
<organism>
    <name type="scientific">Thermococcus onnurineus (strain NA1)</name>
    <dbReference type="NCBI Taxonomy" id="523850"/>
    <lineage>
        <taxon>Archaea</taxon>
        <taxon>Methanobacteriati</taxon>
        <taxon>Methanobacteriota</taxon>
        <taxon>Thermococci</taxon>
        <taxon>Thermococcales</taxon>
        <taxon>Thermococcaceae</taxon>
        <taxon>Thermococcus</taxon>
    </lineage>
</organism>
<keyword id="KW-0030">Aminoacyl-tRNA synthetase</keyword>
<keyword id="KW-0067">ATP-binding</keyword>
<keyword id="KW-0963">Cytoplasm</keyword>
<keyword id="KW-0436">Ligase</keyword>
<keyword id="KW-0547">Nucleotide-binding</keyword>
<keyword id="KW-0648">Protein biosynthesis</keyword>
<dbReference type="EC" id="6.1.1.11" evidence="1"/>
<dbReference type="EMBL" id="CP000855">
    <property type="protein sequence ID" value="ACJ16578.1"/>
    <property type="molecule type" value="Genomic_DNA"/>
</dbReference>
<dbReference type="RefSeq" id="WP_012572050.1">
    <property type="nucleotide sequence ID" value="NC_011529.1"/>
</dbReference>
<dbReference type="SMR" id="B6YWW5"/>
<dbReference type="STRING" id="523850.TON_1090"/>
<dbReference type="GeneID" id="7018112"/>
<dbReference type="KEGG" id="ton:TON_1090"/>
<dbReference type="PATRIC" id="fig|523850.10.peg.1098"/>
<dbReference type="eggNOG" id="arCOG00403">
    <property type="taxonomic scope" value="Archaea"/>
</dbReference>
<dbReference type="HOGENOM" id="CLU_023797_0_1_2"/>
<dbReference type="OrthoDB" id="35932at2157"/>
<dbReference type="UniPathway" id="UPA00906">
    <property type="reaction ID" value="UER00895"/>
</dbReference>
<dbReference type="Proteomes" id="UP000002727">
    <property type="component" value="Chromosome"/>
</dbReference>
<dbReference type="GO" id="GO:0005737">
    <property type="term" value="C:cytoplasm"/>
    <property type="evidence" value="ECO:0007669"/>
    <property type="project" value="UniProtKB-SubCell"/>
</dbReference>
<dbReference type="GO" id="GO:0005524">
    <property type="term" value="F:ATP binding"/>
    <property type="evidence" value="ECO:0007669"/>
    <property type="project" value="UniProtKB-UniRule"/>
</dbReference>
<dbReference type="GO" id="GO:0004828">
    <property type="term" value="F:serine-tRNA ligase activity"/>
    <property type="evidence" value="ECO:0007669"/>
    <property type="project" value="UniProtKB-UniRule"/>
</dbReference>
<dbReference type="GO" id="GO:0016260">
    <property type="term" value="P:selenocysteine biosynthetic process"/>
    <property type="evidence" value="ECO:0007669"/>
    <property type="project" value="UniProtKB-UniRule"/>
</dbReference>
<dbReference type="GO" id="GO:0006434">
    <property type="term" value="P:seryl-tRNA aminoacylation"/>
    <property type="evidence" value="ECO:0007669"/>
    <property type="project" value="UniProtKB-UniRule"/>
</dbReference>
<dbReference type="CDD" id="cd00770">
    <property type="entry name" value="SerRS_core"/>
    <property type="match status" value="1"/>
</dbReference>
<dbReference type="FunFam" id="3.30.930.10:FF:000048">
    <property type="entry name" value="Serine--tRNA ligase"/>
    <property type="match status" value="1"/>
</dbReference>
<dbReference type="Gene3D" id="3.30.930.10">
    <property type="entry name" value="Bira Bifunctional Protein, Domain 2"/>
    <property type="match status" value="1"/>
</dbReference>
<dbReference type="Gene3D" id="1.10.287.40">
    <property type="entry name" value="Serine-tRNA synthetase, tRNA binding domain"/>
    <property type="match status" value="1"/>
</dbReference>
<dbReference type="HAMAP" id="MF_00176">
    <property type="entry name" value="Ser_tRNA_synth_type1"/>
    <property type="match status" value="1"/>
</dbReference>
<dbReference type="InterPro" id="IPR002314">
    <property type="entry name" value="aa-tRNA-synt_IIb"/>
</dbReference>
<dbReference type="InterPro" id="IPR006195">
    <property type="entry name" value="aa-tRNA-synth_II"/>
</dbReference>
<dbReference type="InterPro" id="IPR045864">
    <property type="entry name" value="aa-tRNA-synth_II/BPL/LPL"/>
</dbReference>
<dbReference type="InterPro" id="IPR002317">
    <property type="entry name" value="Ser-tRNA-ligase_type_1"/>
</dbReference>
<dbReference type="InterPro" id="IPR015866">
    <property type="entry name" value="Ser-tRNA-synth_1_N"/>
</dbReference>
<dbReference type="InterPro" id="IPR042103">
    <property type="entry name" value="SerRS_1_N_sf"/>
</dbReference>
<dbReference type="InterPro" id="IPR033729">
    <property type="entry name" value="SerRS_core"/>
</dbReference>
<dbReference type="InterPro" id="IPR010978">
    <property type="entry name" value="tRNA-bd_arm"/>
</dbReference>
<dbReference type="NCBIfam" id="TIGR00414">
    <property type="entry name" value="serS"/>
    <property type="match status" value="1"/>
</dbReference>
<dbReference type="PANTHER" id="PTHR11778">
    <property type="entry name" value="SERYL-TRNA SYNTHETASE"/>
    <property type="match status" value="1"/>
</dbReference>
<dbReference type="Pfam" id="PF02403">
    <property type="entry name" value="Seryl_tRNA_N"/>
    <property type="match status" value="1"/>
</dbReference>
<dbReference type="Pfam" id="PF00587">
    <property type="entry name" value="tRNA-synt_2b"/>
    <property type="match status" value="1"/>
</dbReference>
<dbReference type="PIRSF" id="PIRSF001529">
    <property type="entry name" value="Ser-tRNA-synth_IIa"/>
    <property type="match status" value="1"/>
</dbReference>
<dbReference type="PRINTS" id="PR00981">
    <property type="entry name" value="TRNASYNTHSER"/>
</dbReference>
<dbReference type="SUPFAM" id="SSF55681">
    <property type="entry name" value="Class II aaRS and biotin synthetases"/>
    <property type="match status" value="1"/>
</dbReference>
<dbReference type="SUPFAM" id="SSF46589">
    <property type="entry name" value="tRNA-binding arm"/>
    <property type="match status" value="1"/>
</dbReference>
<dbReference type="PROSITE" id="PS50862">
    <property type="entry name" value="AA_TRNA_LIGASE_II"/>
    <property type="match status" value="1"/>
</dbReference>
<reference key="1">
    <citation type="journal article" date="2008" name="J. Bacteriol.">
        <title>The complete genome sequence of Thermococcus onnurineus NA1 reveals a mixed heterotrophic and carboxydotrophic metabolism.</title>
        <authorList>
            <person name="Lee H.S."/>
            <person name="Kang S.G."/>
            <person name="Bae S.S."/>
            <person name="Lim J.K."/>
            <person name="Cho Y."/>
            <person name="Kim Y.J."/>
            <person name="Jeon J.H."/>
            <person name="Cha S.-S."/>
            <person name="Kwon K.K."/>
            <person name="Kim H.-T."/>
            <person name="Park C.-J."/>
            <person name="Lee H.-W."/>
            <person name="Kim S.I."/>
            <person name="Chun J."/>
            <person name="Colwell R.R."/>
            <person name="Kim S.-J."/>
            <person name="Lee J.-H."/>
        </authorList>
    </citation>
    <scope>NUCLEOTIDE SEQUENCE [LARGE SCALE GENOMIC DNA]</scope>
    <source>
        <strain>NA1</strain>
    </source>
</reference>
<proteinExistence type="inferred from homology"/>
<feature type="chain" id="PRO_1000098136" description="Serine--tRNA ligase">
    <location>
        <begin position="1"/>
        <end position="457"/>
    </location>
</feature>
<feature type="binding site" evidence="1">
    <location>
        <begin position="252"/>
        <end position="254"/>
    </location>
    <ligand>
        <name>L-serine</name>
        <dbReference type="ChEBI" id="CHEBI:33384"/>
    </ligand>
</feature>
<feature type="binding site" evidence="1">
    <location>
        <begin position="283"/>
        <end position="285"/>
    </location>
    <ligand>
        <name>ATP</name>
        <dbReference type="ChEBI" id="CHEBI:30616"/>
    </ligand>
</feature>
<feature type="binding site" evidence="1">
    <location>
        <position position="299"/>
    </location>
    <ligand>
        <name>ATP</name>
        <dbReference type="ChEBI" id="CHEBI:30616"/>
    </ligand>
</feature>
<feature type="binding site" evidence="1">
    <location>
        <position position="306"/>
    </location>
    <ligand>
        <name>L-serine</name>
        <dbReference type="ChEBI" id="CHEBI:33384"/>
    </ligand>
</feature>
<feature type="binding site" evidence="1">
    <location>
        <begin position="370"/>
        <end position="373"/>
    </location>
    <ligand>
        <name>ATP</name>
        <dbReference type="ChEBI" id="CHEBI:30616"/>
    </ligand>
</feature>
<feature type="binding site" evidence="1">
    <location>
        <position position="406"/>
    </location>
    <ligand>
        <name>L-serine</name>
        <dbReference type="ChEBI" id="CHEBI:33384"/>
    </ligand>
</feature>
<sequence>MLDIKLIRENPDLVKGDLIKRGEIEKIKWIDEILELDKKWRENLRKINQLRKERNQLAVQIGKRKKAGEPIDDLLAKSNEIVKQIETLEKEVEELRAKIDYYLWRLPNITHESVPIGKDDSENVPIRFWGKAKVWEGFLETFKEQSLGKMDYEVIDWRPRLHVDMLEILRGADIERAAKVSGSRFYYLLNELVILDLALIRFALDKLIEKGFIPVIPPYMVRRYVEEGVTSFGDFEDVIYKVEGEDLYLIPTAEHPLAGMHANEILEGKDLPLLYVGISPCFRKEAGTAGKDTKGIFRVHQFHKVEQFVYSRPEESWEWHEKLIQNAEEIFQELEIPYRVVNICTGDLGYVAAKKYDIEAWMAGQGKFREVVSASNCTEWQARRLNIRYRDKTHEKPKFVHTLNSTAIATSRAIVAILENHQTEEGVVKLPKVLWKYTGFKEILPAHMKEKCCQGLE</sequence>
<evidence type="ECO:0000255" key="1">
    <source>
        <dbReference type="HAMAP-Rule" id="MF_00176"/>
    </source>
</evidence>
<accession>B6YWW5</accession>